<proteinExistence type="evidence at protein level"/>
<reference key="1">
    <citation type="journal article" date="1998" name="Proc. Natl. Acad. Sci. U.S.A.">
        <title>Regulation of matrix metalloproteinase-9 and inhibition of tumor invasion by the membrane-anchored glycoprotein RECK.</title>
        <authorList>
            <person name="Takahashi C."/>
            <person name="Sheng Z."/>
            <person name="Horan T.P."/>
            <person name="Kitayama H."/>
            <person name="Maki M."/>
            <person name="Hitomi K."/>
            <person name="Kitaura Y."/>
            <person name="Takai S."/>
            <person name="Sasahara R.M."/>
            <person name="Horimoto A."/>
            <person name="Ikawa Y."/>
            <person name="Ratzkin B.J."/>
            <person name="Arakawa T."/>
            <person name="Noda M."/>
        </authorList>
    </citation>
    <scope>NUCLEOTIDE SEQUENCE [MRNA]</scope>
    <scope>DEVELOPMENTAL STAGE</scope>
</reference>
<reference key="2">
    <citation type="journal article" date="2009" name="PLoS Biol.">
        <title>Lineage-specific biology revealed by a finished genome assembly of the mouse.</title>
        <authorList>
            <person name="Church D.M."/>
            <person name="Goodstadt L."/>
            <person name="Hillier L.W."/>
            <person name="Zody M.C."/>
            <person name="Goldstein S."/>
            <person name="She X."/>
            <person name="Bult C.J."/>
            <person name="Agarwala R."/>
            <person name="Cherry J.L."/>
            <person name="DiCuccio M."/>
            <person name="Hlavina W."/>
            <person name="Kapustin Y."/>
            <person name="Meric P."/>
            <person name="Maglott D."/>
            <person name="Birtle Z."/>
            <person name="Marques A.C."/>
            <person name="Graves T."/>
            <person name="Zhou S."/>
            <person name="Teague B."/>
            <person name="Potamousis K."/>
            <person name="Churas C."/>
            <person name="Place M."/>
            <person name="Herschleb J."/>
            <person name="Runnheim R."/>
            <person name="Forrest D."/>
            <person name="Amos-Landgraf J."/>
            <person name="Schwartz D.C."/>
            <person name="Cheng Z."/>
            <person name="Lindblad-Toh K."/>
            <person name="Eichler E.E."/>
            <person name="Ponting C.P."/>
        </authorList>
    </citation>
    <scope>NUCLEOTIDE SEQUENCE [LARGE SCALE GENOMIC DNA]</scope>
    <source>
        <strain>C57BL/6J</strain>
    </source>
</reference>
<reference key="3">
    <citation type="journal article" date="2010" name="Cell">
        <title>A tissue-specific atlas of mouse protein phosphorylation and expression.</title>
        <authorList>
            <person name="Huttlin E.L."/>
            <person name="Jedrychowski M.P."/>
            <person name="Elias J.E."/>
            <person name="Goswami T."/>
            <person name="Rad R."/>
            <person name="Beausoleil S.A."/>
            <person name="Villen J."/>
            <person name="Haas W."/>
            <person name="Sowa M.E."/>
            <person name="Gygi S.P."/>
        </authorList>
    </citation>
    <scope>IDENTIFICATION BY MASS SPECTROMETRY [LARGE SCALE ANALYSIS]</scope>
    <source>
        <tissue>Lung</tissue>
    </source>
</reference>
<reference key="4">
    <citation type="journal article" date="2001" name="Cell">
        <title>The membrane-anchored MMP inhibitor RECK is a key regulator of extracellular matrix integrity and angiogenesis.</title>
        <authorList>
            <person name="Oh J."/>
            <person name="Takahashi R."/>
            <person name="Kondo S."/>
            <person name="Mizoguchi A."/>
            <person name="Adachi E."/>
            <person name="Sasahara R.M."/>
            <person name="Nishimura S."/>
            <person name="Imamura Y."/>
            <person name="Kitayama H."/>
            <person name="Alexander D.B."/>
            <person name="Ide C."/>
            <person name="Horan T.P."/>
            <person name="Arakawa T."/>
            <person name="Yoshida H."/>
            <person name="Nishikawa S."/>
            <person name="Itoh Y."/>
            <person name="Seiki M."/>
            <person name="Itohara S."/>
            <person name="Takahashi C."/>
            <person name="Noda M."/>
        </authorList>
    </citation>
    <scope>FUNCTION</scope>
    <scope>DISRUPTION PHENOTYPE</scope>
</reference>
<reference key="5">
    <citation type="journal article" date="2015" name="Sci. Rep.">
        <title>Critical roles for murine Reck in the regulation of vascular patterning and stabilization.</title>
        <authorList>
            <person name="de Almeida G.M."/>
            <person name="Yamamoto M."/>
            <person name="Morioka Y."/>
            <person name="Ogawa S."/>
            <person name="Matsuzaki T."/>
            <person name="Noda M."/>
        </authorList>
    </citation>
    <scope>DISRUPTION PHENOTYPE</scope>
</reference>
<reference key="6">
    <citation type="journal article" date="2017" name="Neuron">
        <title>Reck and Gpr124 Are Essential Receptor Cofactors for Wnt7a/Wnt7b-specific signaling in mammalian CNS angiogenesis and blood-brain barrier regulation.</title>
        <authorList>
            <person name="Cho C."/>
            <person name="Smallwood P.M."/>
            <person name="Nathans J."/>
        </authorList>
    </citation>
    <scope>FUNCTION</scope>
    <scope>SUBCELLULAR LOCATION</scope>
    <scope>INTERACTION WITH ADGRA2</scope>
    <scope>DISRUPTION PHENOTYPE</scope>
    <scope>MUTAGENESIS OF GLN-68; ARG-69; PRO-71; ASP-72 AND TYR-73</scope>
</reference>
<sequence length="971" mass="106082">MASVRASPRSALLLLLAAAGVAEVTGGLAPGSAGAVCCNHSKDNQMCRDVCEQIFSSKSESRLKHLLQRAPDYCPETMVEIWSCMNSSLPGVFKKSDGWVGLGCCELAIGLECRQACKQASSKNDISKVCRKEYENALFSCISRNEMGSVCCSYAGHHTNCREFCQAIFRTDSSPGPSQIKAVENYCASISPQLIHCVNNYTQSYPMRNPTDSLYCCDRAEDHACQNACKRILMSKKTEMEIVDGLIEGCKTQPLPQDPLWQCFLESSQSVHPGVTVHPPPSTGLDGAKLHCCSKANTSTCRELCTKLYSMSWGNTQSWQEFDRICEYNPVEVSMLTCLADVREPCQLGCTNLTYCTNFNNRPTELFRSCTAQSDQGAMSDMKLWEKGSIKMPFISIPVLDIKTCQPEMWKAVACSLQIKPCHSKSRGSIICKSDCVEILKKCGDQNKFPEEHTAESICEFLSPADDLESCIPLDTYLRPSALGNIIEEVTHPCNPNPCPANELCEVNRKGCPSADPCLPYSCVQGCKLGEASDFIVRQGTLIQVPSSAGEVGCYKICSCGQSGLLENCMEMHCIDLQKSCIVGGKRKSHGTSFTIDCNVCSCFAGNLVCSTRLCLSEHSSDDDRRTFTGLPCNCADQFVPVCAQNGRTYPSACIARCVGLQDHQFEFGPCISKNPCNPNLCPKSQRCVPKPQVCLTTFDKFGCSQYECVPRQLTCDQARDPVCDTDHMEHSNLCTLYQRGKSLSYRGPCQPFCRAKEPVCGHNGETYSSVCAAYSDRVAVDYYGPCQAVGVLSEYSAVAECAAVKCPSLSAIGCKPIIPPGACCPLCAGMLRVLFDKEKLDTIAKVTSKKPITVVEILQKVRMHVSVPQCDVFGYLSIESEIVILIIPVDHYPKALQIEACNKEAEKIESLINSDSPTLASHVPLSALIISQVQVSSSLPSSAVVGRPLFHSLLLLLSLGLTVHLLWTRP</sequence>
<dbReference type="EMBL" id="AB006960">
    <property type="protein sequence ID" value="BAA34061.1"/>
    <property type="molecule type" value="mRNA"/>
</dbReference>
<dbReference type="EMBL" id="AL772204">
    <property type="status" value="NOT_ANNOTATED_CDS"/>
    <property type="molecule type" value="Genomic_DNA"/>
</dbReference>
<dbReference type="EMBL" id="AL773539">
    <property type="status" value="NOT_ANNOTATED_CDS"/>
    <property type="molecule type" value="Genomic_DNA"/>
</dbReference>
<dbReference type="CCDS" id="CCDS18116.1"/>
<dbReference type="PIR" id="PC7035">
    <property type="entry name" value="PC7035"/>
</dbReference>
<dbReference type="RefSeq" id="NP_057887.2">
    <property type="nucleotide sequence ID" value="NM_016678.3"/>
</dbReference>
<dbReference type="PDB" id="6WBH">
    <property type="method" value="X-ray"/>
    <property type="resolution" value="2.46 A"/>
    <property type="chains" value="A=206-270"/>
</dbReference>
<dbReference type="PDB" id="6WBJ">
    <property type="method" value="X-ray"/>
    <property type="resolution" value="1.65 A"/>
    <property type="chains" value="A=206-270"/>
</dbReference>
<dbReference type="PDBsum" id="6WBH"/>
<dbReference type="PDBsum" id="6WBJ"/>
<dbReference type="SMR" id="Q9Z0J1"/>
<dbReference type="BioGRID" id="207333">
    <property type="interactions" value="1"/>
</dbReference>
<dbReference type="FunCoup" id="Q9Z0J1">
    <property type="interactions" value="832"/>
</dbReference>
<dbReference type="IntAct" id="Q9Z0J1">
    <property type="interactions" value="2"/>
</dbReference>
<dbReference type="STRING" id="10090.ENSMUSP00000030198"/>
<dbReference type="GlyCosmos" id="Q9Z0J1">
    <property type="glycosylation" value="5 sites, No reported glycans"/>
</dbReference>
<dbReference type="GlyGen" id="Q9Z0J1">
    <property type="glycosylation" value="5 sites"/>
</dbReference>
<dbReference type="iPTMnet" id="Q9Z0J1"/>
<dbReference type="PhosphoSitePlus" id="Q9Z0J1"/>
<dbReference type="PaxDb" id="10090-ENSMUSP00000030198"/>
<dbReference type="ProteomicsDB" id="255059"/>
<dbReference type="Pumba" id="Q9Z0J1"/>
<dbReference type="Antibodypedia" id="26128">
    <property type="antibodies" value="294 antibodies from 34 providers"/>
</dbReference>
<dbReference type="DNASU" id="53614"/>
<dbReference type="Ensembl" id="ENSMUST00000030198.7">
    <property type="protein sequence ID" value="ENSMUSP00000030198.7"/>
    <property type="gene ID" value="ENSMUSG00000028476.14"/>
</dbReference>
<dbReference type="GeneID" id="53614"/>
<dbReference type="KEGG" id="mmu:53614"/>
<dbReference type="UCSC" id="uc012ddg.1">
    <property type="organism name" value="mouse"/>
</dbReference>
<dbReference type="AGR" id="MGI:1855698"/>
<dbReference type="CTD" id="8434"/>
<dbReference type="MGI" id="MGI:1855698">
    <property type="gene designation" value="Reck"/>
</dbReference>
<dbReference type="VEuPathDB" id="HostDB:ENSMUSG00000028476"/>
<dbReference type="eggNOG" id="KOG3649">
    <property type="taxonomic scope" value="Eukaryota"/>
</dbReference>
<dbReference type="GeneTree" id="ENSGT00390000018540"/>
<dbReference type="HOGENOM" id="CLU_013883_0_0_1"/>
<dbReference type="InParanoid" id="Q9Z0J1"/>
<dbReference type="OMA" id="GEVCDTQ"/>
<dbReference type="OrthoDB" id="5956770at2759"/>
<dbReference type="PhylomeDB" id="Q9Z0J1"/>
<dbReference type="TreeFam" id="TF324424"/>
<dbReference type="Reactome" id="R-MMU-163125">
    <property type="pathway name" value="Post-translational modification: synthesis of GPI-anchored proteins"/>
</dbReference>
<dbReference type="BioGRID-ORCS" id="53614">
    <property type="hits" value="2 hits in 76 CRISPR screens"/>
</dbReference>
<dbReference type="ChiTaRS" id="Reck">
    <property type="organism name" value="mouse"/>
</dbReference>
<dbReference type="PRO" id="PR:Q9Z0J1"/>
<dbReference type="Proteomes" id="UP000000589">
    <property type="component" value="Chromosome 4"/>
</dbReference>
<dbReference type="RNAct" id="Q9Z0J1">
    <property type="molecule type" value="protein"/>
</dbReference>
<dbReference type="Bgee" id="ENSMUSG00000028476">
    <property type="expression patterns" value="Expressed in iris and 257 other cell types or tissues"/>
</dbReference>
<dbReference type="GO" id="GO:0005886">
    <property type="term" value="C:plasma membrane"/>
    <property type="evidence" value="ECO:0000314"/>
    <property type="project" value="UniProtKB"/>
</dbReference>
<dbReference type="GO" id="GO:0098552">
    <property type="term" value="C:side of membrane"/>
    <property type="evidence" value="ECO:0007669"/>
    <property type="project" value="UniProtKB-KW"/>
</dbReference>
<dbReference type="GO" id="GO:1990909">
    <property type="term" value="C:Wnt signalosome"/>
    <property type="evidence" value="ECO:0000314"/>
    <property type="project" value="UniProtKB"/>
</dbReference>
<dbReference type="GO" id="GO:0015026">
    <property type="term" value="F:coreceptor activity"/>
    <property type="evidence" value="ECO:0000314"/>
    <property type="project" value="UniProtKB"/>
</dbReference>
<dbReference type="GO" id="GO:0004866">
    <property type="term" value="F:endopeptidase inhibitor activity"/>
    <property type="evidence" value="ECO:0000314"/>
    <property type="project" value="MGI"/>
</dbReference>
<dbReference type="GO" id="GO:0008191">
    <property type="term" value="F:metalloendopeptidase inhibitor activity"/>
    <property type="evidence" value="ECO:0000250"/>
    <property type="project" value="UniProtKB"/>
</dbReference>
<dbReference type="GO" id="GO:0004867">
    <property type="term" value="F:serine-type endopeptidase inhibitor activity"/>
    <property type="evidence" value="ECO:0007669"/>
    <property type="project" value="UniProtKB-KW"/>
</dbReference>
<dbReference type="GO" id="GO:0017147">
    <property type="term" value="F:Wnt-protein binding"/>
    <property type="evidence" value="ECO:0000353"/>
    <property type="project" value="UniProtKB"/>
</dbReference>
<dbReference type="GO" id="GO:0001955">
    <property type="term" value="P:blood vessel maturation"/>
    <property type="evidence" value="ECO:0000315"/>
    <property type="project" value="MGI"/>
</dbReference>
<dbReference type="GO" id="GO:0060070">
    <property type="term" value="P:canonical Wnt signaling pathway"/>
    <property type="evidence" value="ECO:0000314"/>
    <property type="project" value="UniProtKB"/>
</dbReference>
<dbReference type="GO" id="GO:0007566">
    <property type="term" value="P:embryo implantation"/>
    <property type="evidence" value="ECO:0000314"/>
    <property type="project" value="MGI"/>
</dbReference>
<dbReference type="GO" id="GO:0035115">
    <property type="term" value="P:embryonic forelimb morphogenesis"/>
    <property type="evidence" value="ECO:0000315"/>
    <property type="project" value="MGI"/>
</dbReference>
<dbReference type="GO" id="GO:0030198">
    <property type="term" value="P:extracellular matrix organization"/>
    <property type="evidence" value="ECO:0000315"/>
    <property type="project" value="MGI"/>
</dbReference>
<dbReference type="GO" id="GO:0030336">
    <property type="term" value="P:negative regulation of cell migration"/>
    <property type="evidence" value="ECO:0007669"/>
    <property type="project" value="Ensembl"/>
</dbReference>
<dbReference type="GO" id="GO:0010716">
    <property type="term" value="P:negative regulation of extracellular matrix disassembly"/>
    <property type="evidence" value="ECO:0000315"/>
    <property type="project" value="BHF-UCL"/>
</dbReference>
<dbReference type="GO" id="GO:1904684">
    <property type="term" value="P:negative regulation of metalloendopeptidase activity"/>
    <property type="evidence" value="ECO:0000250"/>
    <property type="project" value="UniProtKB"/>
</dbReference>
<dbReference type="GO" id="GO:0090263">
    <property type="term" value="P:positive regulation of canonical Wnt signaling pathway"/>
    <property type="evidence" value="ECO:0000314"/>
    <property type="project" value="UniProtKB"/>
</dbReference>
<dbReference type="GO" id="GO:0045765">
    <property type="term" value="P:regulation of angiogenesis"/>
    <property type="evidence" value="ECO:0000315"/>
    <property type="project" value="UniProtKB"/>
</dbReference>
<dbReference type="GO" id="GO:0090210">
    <property type="term" value="P:regulation of establishment of blood-brain barrier"/>
    <property type="evidence" value="ECO:0000315"/>
    <property type="project" value="UniProtKB"/>
</dbReference>
<dbReference type="FunFam" id="3.30.60.30:FF:000011">
    <property type="entry name" value="reversion-inducing cysteine-rich protein with Kazal motifs isoform X1"/>
    <property type="match status" value="1"/>
</dbReference>
<dbReference type="FunFam" id="3.30.60.30:FF:000021">
    <property type="entry name" value="reversion-inducing cysteine-rich protein with Kazal motifs isoform X1"/>
    <property type="match status" value="1"/>
</dbReference>
<dbReference type="Gene3D" id="3.30.60.30">
    <property type="match status" value="2"/>
</dbReference>
<dbReference type="InterPro" id="IPR056978">
    <property type="entry name" value="CC4_RECK"/>
</dbReference>
<dbReference type="InterPro" id="IPR056976">
    <property type="entry name" value="EGF1_RECK"/>
</dbReference>
<dbReference type="InterPro" id="IPR055134">
    <property type="entry name" value="EGF2_RECK_dom"/>
</dbReference>
<dbReference type="InterPro" id="IPR056977">
    <property type="entry name" value="FnI_RECK"/>
</dbReference>
<dbReference type="InterPro" id="IPR056979">
    <property type="entry name" value="FZ_RECK"/>
</dbReference>
<dbReference type="InterPro" id="IPR002350">
    <property type="entry name" value="Kazal_dom"/>
</dbReference>
<dbReference type="InterPro" id="IPR036058">
    <property type="entry name" value="Kazal_dom_sf"/>
</dbReference>
<dbReference type="InterPro" id="IPR039016">
    <property type="entry name" value="RECK"/>
</dbReference>
<dbReference type="InterPro" id="IPR055110">
    <property type="entry name" value="RECK-like_N"/>
</dbReference>
<dbReference type="PANTHER" id="PTHR13487:SF3">
    <property type="entry name" value="REVERSION-INDUCING CYSTEINE-RICH PROTEIN WITH KAZAL MOTIFS"/>
    <property type="match status" value="1"/>
</dbReference>
<dbReference type="PANTHER" id="PTHR13487">
    <property type="entry name" value="SERINE PROTEASE INHIBITOR"/>
    <property type="match status" value="1"/>
</dbReference>
<dbReference type="Pfam" id="PF23332">
    <property type="entry name" value="CC4_RECK"/>
    <property type="match status" value="2"/>
</dbReference>
<dbReference type="Pfam" id="PF25027">
    <property type="entry name" value="EGF1_RECK"/>
    <property type="match status" value="1"/>
</dbReference>
<dbReference type="Pfam" id="PF22955">
    <property type="entry name" value="EGF2_RECK"/>
    <property type="match status" value="1"/>
</dbReference>
<dbReference type="Pfam" id="PF25028">
    <property type="entry name" value="FnI_RECK"/>
    <property type="match status" value="1"/>
</dbReference>
<dbReference type="Pfam" id="PF23298">
    <property type="entry name" value="FZ_RECK"/>
    <property type="match status" value="1"/>
</dbReference>
<dbReference type="Pfam" id="PF07648">
    <property type="entry name" value="Kazal_2"/>
    <property type="match status" value="3"/>
</dbReference>
<dbReference type="Pfam" id="PF22961">
    <property type="entry name" value="RECK-like_N"/>
    <property type="match status" value="1"/>
</dbReference>
<dbReference type="SMART" id="SM00280">
    <property type="entry name" value="KAZAL"/>
    <property type="match status" value="3"/>
</dbReference>
<dbReference type="SUPFAM" id="SSF100895">
    <property type="entry name" value="Kazal-type serine protease inhibitors"/>
    <property type="match status" value="3"/>
</dbReference>
<dbReference type="PROSITE" id="PS00282">
    <property type="entry name" value="KAZAL_1"/>
    <property type="match status" value="1"/>
</dbReference>
<dbReference type="PROSITE" id="PS51465">
    <property type="entry name" value="KAZAL_2"/>
    <property type="match status" value="3"/>
</dbReference>
<feature type="signal peptide" evidence="2">
    <location>
        <begin position="1"/>
        <end position="22"/>
    </location>
</feature>
<feature type="chain" id="PRO_0000016585" description="Reversion-inducing cysteine-rich protein with Kazal motifs">
    <location>
        <begin position="23"/>
        <end position="942"/>
    </location>
</feature>
<feature type="propeptide" id="PRO_0000016586" description="Removed in mature form" evidence="2">
    <location>
        <begin position="943"/>
        <end position="971"/>
    </location>
</feature>
<feature type="repeat" description="Knot 1">
    <location>
        <begin position="37"/>
        <end position="84"/>
    </location>
</feature>
<feature type="repeat" description="Knot 2">
    <location>
        <begin position="104"/>
        <end position="141"/>
    </location>
</feature>
<feature type="repeat" description="Knot 3">
    <location>
        <begin position="151"/>
        <end position="197"/>
    </location>
</feature>
<feature type="repeat" description="Knot 4">
    <location>
        <begin position="216"/>
        <end position="263"/>
    </location>
</feature>
<feature type="repeat" description="Knot 5">
    <location>
        <begin position="292"/>
        <end position="338"/>
    </location>
</feature>
<feature type="domain" description="Kazal-like 1" evidence="3">
    <location>
        <begin position="627"/>
        <end position="673"/>
    </location>
</feature>
<feature type="domain" description="Kazal-like 2" evidence="3">
    <location>
        <begin position="698"/>
        <end position="752"/>
    </location>
</feature>
<feature type="domain" description="Kazal-like 2; degenerate" evidence="3">
    <location>
        <begin position="704"/>
        <end position="750"/>
    </location>
</feature>
<feature type="domain" description="Kazal-like 3" evidence="3">
    <location>
        <begin position="753"/>
        <end position="789"/>
    </location>
</feature>
<feature type="region of interest" description="5 X Knot repeats">
    <location>
        <begin position="37"/>
        <end position="338"/>
    </location>
</feature>
<feature type="lipid moiety-binding region" description="GPI-anchor amidated serine" evidence="2">
    <location>
        <position position="942"/>
    </location>
</feature>
<feature type="glycosylation site" description="N-linked (GlcNAc...) asparagine" evidence="2">
    <location>
        <position position="39"/>
    </location>
</feature>
<feature type="glycosylation site" description="N-linked (GlcNAc...) asparagine" evidence="2">
    <location>
        <position position="86"/>
    </location>
</feature>
<feature type="glycosylation site" description="N-linked (GlcNAc...) asparagine" evidence="2">
    <location>
        <position position="200"/>
    </location>
</feature>
<feature type="glycosylation site" description="N-linked (GlcNAc...) asparagine" evidence="2">
    <location>
        <position position="297"/>
    </location>
</feature>
<feature type="glycosylation site" description="N-linked (GlcNAc...) asparagine" evidence="2">
    <location>
        <position position="352"/>
    </location>
</feature>
<feature type="disulfide bond" evidence="3">
    <location>
        <begin position="633"/>
        <end position="658"/>
    </location>
</feature>
<feature type="disulfide bond" evidence="3">
    <location>
        <begin position="635"/>
        <end position="654"/>
    </location>
</feature>
<feature type="disulfide bond" evidence="3">
    <location>
        <begin position="643"/>
        <end position="671"/>
    </location>
</feature>
<feature type="disulfide bond" evidence="3">
    <location>
        <begin position="716"/>
        <end position="735"/>
    </location>
</feature>
<feature type="disulfide bond" evidence="3">
    <location>
        <begin position="724"/>
        <end position="750"/>
    </location>
</feature>
<feature type="disulfide bond" evidence="3">
    <location>
        <begin position="761"/>
        <end position="787"/>
    </location>
</feature>
<feature type="mutagenesis site" description="Does not affect interaction with ADGRA2." evidence="6">
    <original>Q</original>
    <variation>A</variation>
    <location>
        <position position="68"/>
    </location>
</feature>
<feature type="mutagenesis site" description="Decreased interaction with ADGRA2." evidence="6">
    <original>R</original>
    <variation>A</variation>
    <location>
        <position position="69"/>
    </location>
</feature>
<feature type="mutagenesis site" description="Decreased interaction with ADGRA2." evidence="6">
    <original>P</original>
    <variation>A</variation>
    <location>
        <position position="71"/>
    </location>
</feature>
<feature type="mutagenesis site" description="Does not affect interaction with ADGRA2." evidence="6">
    <original>D</original>
    <variation>A</variation>
    <location>
        <position position="72"/>
    </location>
</feature>
<feature type="mutagenesis site" description="Decreased interaction with ADGRA2." evidence="6">
    <original>Y</original>
    <variation>A</variation>
    <location>
        <position position="73"/>
    </location>
</feature>
<feature type="sequence conflict" description="In Ref. 1; BAA34061." evidence="9" ref="1">
    <original>NKF</original>
    <variation>PKG</variation>
    <location>
        <begin position="447"/>
        <end position="449"/>
    </location>
</feature>
<feature type="sequence conflict" description="In Ref. 1; BAA34061." evidence="9" ref="1">
    <original>Q</original>
    <variation>P</variation>
    <location>
        <position position="539"/>
    </location>
</feature>
<feature type="sequence conflict" description="In Ref. 1; BAA34061." evidence="9" ref="1">
    <original>QD</original>
    <variation>HH</variation>
    <location>
        <begin position="662"/>
        <end position="663"/>
    </location>
</feature>
<feature type="sequence conflict" description="In Ref. 1; BAA34061." evidence="9" ref="1">
    <original>K</original>
    <variation>T</variation>
    <location>
        <position position="757"/>
    </location>
</feature>
<feature type="sequence conflict" description="In Ref. 1; BAA34061." evidence="9" ref="1">
    <original>A</original>
    <variation>S</variation>
    <location>
        <position position="804"/>
    </location>
</feature>
<feature type="sequence conflict" description="In Ref. 1; BAA34061." evidence="9" ref="1">
    <original>A</original>
    <variation>E</variation>
    <location>
        <position position="921"/>
    </location>
</feature>
<feature type="sequence conflict" description="In Ref. 1; BAA34061." evidence="9" ref="1">
    <original>P</original>
    <variation>H</variation>
    <location>
        <position position="925"/>
    </location>
</feature>
<feature type="sequence conflict" description="In Ref. 1; BAA34061." evidence="9" ref="1">
    <original>L</original>
    <variation>W</variation>
    <location>
        <position position="960"/>
    </location>
</feature>
<feature type="helix" evidence="11">
    <location>
        <begin position="210"/>
        <end position="213"/>
    </location>
</feature>
<feature type="helix" evidence="11">
    <location>
        <begin position="214"/>
        <end position="217"/>
    </location>
</feature>
<feature type="helix" evidence="11">
    <location>
        <begin position="223"/>
        <end position="233"/>
    </location>
</feature>
<feature type="turn" evidence="11">
    <location>
        <begin position="234"/>
        <end position="236"/>
    </location>
</feature>
<feature type="helix" evidence="11">
    <location>
        <begin position="239"/>
        <end position="250"/>
    </location>
</feature>
<feature type="helix" evidence="11">
    <location>
        <begin position="255"/>
        <end position="257"/>
    </location>
</feature>
<feature type="helix" evidence="11">
    <location>
        <begin position="259"/>
        <end position="267"/>
    </location>
</feature>
<protein>
    <recommendedName>
        <fullName evidence="8">Reversion-inducing cysteine-rich protein with Kazal motifs</fullName>
        <shortName evidence="8">mRECK</shortName>
    </recommendedName>
</protein>
<organism>
    <name type="scientific">Mus musculus</name>
    <name type="common">Mouse</name>
    <dbReference type="NCBI Taxonomy" id="10090"/>
    <lineage>
        <taxon>Eukaryota</taxon>
        <taxon>Metazoa</taxon>
        <taxon>Chordata</taxon>
        <taxon>Craniata</taxon>
        <taxon>Vertebrata</taxon>
        <taxon>Euteleostomi</taxon>
        <taxon>Mammalia</taxon>
        <taxon>Eutheria</taxon>
        <taxon>Euarchontoglires</taxon>
        <taxon>Glires</taxon>
        <taxon>Rodentia</taxon>
        <taxon>Myomorpha</taxon>
        <taxon>Muroidea</taxon>
        <taxon>Muridae</taxon>
        <taxon>Murinae</taxon>
        <taxon>Mus</taxon>
        <taxon>Mus</taxon>
    </lineage>
</organism>
<accession>Q9Z0J1</accession>
<accession>B1AWM3</accession>
<evidence type="ECO:0000250" key="1">
    <source>
        <dbReference type="UniProtKB" id="O95980"/>
    </source>
</evidence>
<evidence type="ECO:0000255" key="2"/>
<evidence type="ECO:0000255" key="3">
    <source>
        <dbReference type="PROSITE-ProRule" id="PRU00798"/>
    </source>
</evidence>
<evidence type="ECO:0000269" key="4">
    <source>
    </source>
</evidence>
<evidence type="ECO:0000269" key="5">
    <source>
    </source>
</evidence>
<evidence type="ECO:0000269" key="6">
    <source>
    </source>
</evidence>
<evidence type="ECO:0000269" key="7">
    <source>
    </source>
</evidence>
<evidence type="ECO:0000303" key="8">
    <source>
    </source>
</evidence>
<evidence type="ECO:0000305" key="9"/>
<evidence type="ECO:0000312" key="10">
    <source>
        <dbReference type="MGI" id="MGI:1855698"/>
    </source>
</evidence>
<evidence type="ECO:0007829" key="11">
    <source>
        <dbReference type="PDB" id="6WBJ"/>
    </source>
</evidence>
<comment type="function">
    <text evidence="1 4 5 6">Functions together with ADGRA2 to enable brain endothelial cells to selectively respond to Wnt7 signals (WNT7A or WNT7B) (PubMed:28803732). Plays a key role in Wnt7-specific responses: required for central nervous system (CNS) angiogenesis and blood-brain barrier regulation (PubMed:26658478, PubMed:28803732). Acts as a Wnt7-specific coactivator of canonical Wnt signaling by decoding Wnt ligands: acts by interacting specifically with the disordered linker region of Wnt7, thereby conferring ligand selectivity for Wnt7 (By similarity). ADGRA2 is then required to deliver RECK-bound Wnt7 to frizzled by assembling a higher-order RECK-ADGRA2-Fzd-LRP5-LRP6 complex (By similarity). Also acts as a serine protease inhibitor: negatively regulates matrix metalloproteinase-9 (MMP9) by suppressing MMP9 secretion and by direct inhibition of its enzymatic activity (PubMed:11747814). Also inhibits metalloproteinase activity of MMP2 and MMP14 (MT1-MMP) (PubMed:11747814).</text>
</comment>
<comment type="subunit">
    <text evidence="1 6">Interacts (via knot repeats) with WNT7A (via disordered linker region); the interaction is direct (By similarity). Interacts (via knot repeats) with WNT7B (via disordered linker region); the interaction is direct (By similarity). Interacts with ADGRA2; the interaction is direct (PubMed:28803732). Interacts with MMP9 (By similarity).</text>
</comment>
<comment type="interaction">
    <interactant intactId="EBI-20720091">
        <id>Q9Z0J1</id>
    </interactant>
    <interactant intactId="EBI-727198">
        <id>O00755</id>
        <label>WNT7A</label>
    </interactant>
    <organismsDiffer>true</organismsDiffer>
    <experiments>4</experiments>
</comment>
<comment type="interaction">
    <interactant intactId="EBI-20720091">
        <id>Q9Z0J1</id>
    </interactant>
    <interactant intactId="EBI-3913589">
        <id>P56706</id>
        <label>WNT7B</label>
    </interactant>
    <organismsDiffer>true</organismsDiffer>
    <experiments>4</experiments>
</comment>
<comment type="subcellular location">
    <subcellularLocation>
        <location evidence="6">Cell membrane</location>
        <topology evidence="1">Lipid-anchor</topology>
        <topology evidence="1">GPI-anchor</topology>
    </subcellularLocation>
</comment>
<comment type="developmental stage">
    <text evidence="7">In 10.5 dpc embryos, widely expressed in mesenchymal tissues and is relatively abundant in the marginal zone of the neural tube and large blood vessels such as the aorta.</text>
</comment>
<comment type="domain">
    <text evidence="1">The Kazal-like domains mediate the serine protease inhibitor activity.</text>
</comment>
<comment type="disruption phenotype">
    <text evidence="4 5 6">Embryonic lethality around 10.5 dpc, caused by reduced tissue integrity, arrested vasculogenesis and precocious neuronal differentiation (PubMed:11747814). Conditional knockout mice lacking Reck in endothelial cells show central nervous system (CNS) angiogenesis defects, characterized by moderate hemorrhages in the forebrain and vascular malformations in the cortex (PubMed:26658478, PubMed:28803732). Conditional deletion in endothelial cells also cause blood-brain barrier defects in neonates (PubMed:28803732). Phenotypes are caused by impaired beta-catenin-dependent signaling (PubMed:28803732).</text>
</comment>
<comment type="similarity">
    <text evidence="9">Belongs to the RECK family.</text>
</comment>
<gene>
    <name evidence="8 10" type="primary">Reck</name>
</gene>
<name>RECK_MOUSE</name>
<keyword id="KW-0002">3D-structure</keyword>
<keyword id="KW-1003">Cell membrane</keyword>
<keyword id="KW-1015">Disulfide bond</keyword>
<keyword id="KW-0325">Glycoprotein</keyword>
<keyword id="KW-0336">GPI-anchor</keyword>
<keyword id="KW-0449">Lipoprotein</keyword>
<keyword id="KW-0472">Membrane</keyword>
<keyword id="KW-0646">Protease inhibitor</keyword>
<keyword id="KW-1185">Reference proteome</keyword>
<keyword id="KW-0677">Repeat</keyword>
<keyword id="KW-0722">Serine protease inhibitor</keyword>
<keyword id="KW-0732">Signal</keyword>
<keyword id="KW-0043">Tumor suppressor</keyword>
<keyword id="KW-0879">Wnt signaling pathway</keyword>